<accession>Q2KJ97</accession>
<accession>A1L535</accession>
<name>NCDN_BOVIN</name>
<evidence type="ECO:0000250" key="1"/>
<evidence type="ECO:0000250" key="2">
    <source>
        <dbReference type="UniProtKB" id="O35095"/>
    </source>
</evidence>
<evidence type="ECO:0000250" key="3">
    <source>
        <dbReference type="UniProtKB" id="Q9UBB6"/>
    </source>
</evidence>
<evidence type="ECO:0000250" key="4">
    <source>
        <dbReference type="UniProtKB" id="Q9Z0E0"/>
    </source>
</evidence>
<evidence type="ECO:0000303" key="5">
    <source>
    </source>
</evidence>
<evidence type="ECO:0000305" key="6"/>
<comment type="function">
    <text evidence="1">Probably involved in signal transduction, in the nervous system, via increasing cell surface localization of GRM5 and positively regulating its signaling. Required for the spatial learning process. Acts as a negative regulator of Ca(2+)-calmodulin-dependent protein kinase 2 (CaMK2) phosphorylation. May play a role in modulating melanin-concentrating hormone-mediated functions via its interaction with MCHR1 that interferes with G protein-coupled signal transduction. May be involved in bone metabolism. May also be involved in neurite outgrowth (By similarity).</text>
</comment>
<comment type="subunit">
    <text evidence="2 3 4">Interacts with MCHR1 (By similarity). Interacts with SEMA4C. Interacts with DIAPH1 (via FH3 domain) (By similarity). Interacts with GRM5.</text>
</comment>
<comment type="subcellular location">
    <subcellularLocation>
        <location evidence="2">Cytoplasm</location>
        <location evidence="2">Cytosol</location>
    </subcellularLocation>
    <subcellularLocation>
        <location evidence="2">Endosome membrane</location>
        <topology evidence="2">Lipid-anchor</topology>
    </subcellularLocation>
    <subcellularLocation>
        <location evidence="2">Cell projection</location>
        <location evidence="2">Dendrite</location>
    </subcellularLocation>
    <subcellularLocation>
        <location evidence="2">Postsynapse</location>
    </subcellularLocation>
    <text evidence="2">Localizes to somatic regions of neurons. Localization to endosome membrane requires palmitoylation.</text>
</comment>
<comment type="alternative products">
    <event type="alternative splicing"/>
    <isoform>
        <id>Q2KJ97-1</id>
        <name>1</name>
        <sequence type="displayed"/>
    </isoform>
    <isoform>
        <id>Q2KJ97-2</id>
        <name>2</name>
        <sequence type="described" ref="VSP_032314"/>
    </isoform>
</comment>
<comment type="PTM">
    <text evidence="2">Palmitoylated. Palmitoylation by ZDHHC1, ZDHHC3 and ZDHHC11 regulates the association of NCDN with endosome membranes. May also be palmitoylated by ZDHHC7.</text>
</comment>
<comment type="similarity">
    <text evidence="6">Belongs to the neurochondrin family.</text>
</comment>
<organism>
    <name type="scientific">Bos taurus</name>
    <name type="common">Bovine</name>
    <dbReference type="NCBI Taxonomy" id="9913"/>
    <lineage>
        <taxon>Eukaryota</taxon>
        <taxon>Metazoa</taxon>
        <taxon>Chordata</taxon>
        <taxon>Craniata</taxon>
        <taxon>Vertebrata</taxon>
        <taxon>Euteleostomi</taxon>
        <taxon>Mammalia</taxon>
        <taxon>Eutheria</taxon>
        <taxon>Laurasiatheria</taxon>
        <taxon>Artiodactyla</taxon>
        <taxon>Ruminantia</taxon>
        <taxon>Pecora</taxon>
        <taxon>Bovidae</taxon>
        <taxon>Bovinae</taxon>
        <taxon>Bos</taxon>
    </lineage>
</organism>
<gene>
    <name type="primary">NCDN</name>
</gene>
<proteinExistence type="evidence at transcript level"/>
<feature type="initiator methionine" description="Removed" evidence="3">
    <location>
        <position position="1"/>
    </location>
</feature>
<feature type="chain" id="PRO_0000324616" description="Neurochondrin">
    <location>
        <begin position="2"/>
        <end position="729"/>
    </location>
</feature>
<feature type="modified residue" description="N-acetylserine" evidence="3">
    <location>
        <position position="2"/>
    </location>
</feature>
<feature type="modified residue" description="Phosphoserine" evidence="3">
    <location>
        <position position="2"/>
    </location>
</feature>
<feature type="modified residue" description="Asymmetric dimethylarginine" evidence="4">
    <location>
        <position position="75"/>
    </location>
</feature>
<feature type="modified residue" description="Phosphoserine" evidence="2">
    <location>
        <position position="448"/>
    </location>
</feature>
<feature type="lipid moiety-binding region" description="S-palmitoyl cysteine" evidence="2">
    <location>
        <position position="3"/>
    </location>
</feature>
<feature type="lipid moiety-binding region" description="S-palmitoyl cysteine" evidence="2">
    <location>
        <position position="4"/>
    </location>
</feature>
<feature type="splice variant" id="VSP_032314" description="In isoform 2." evidence="5">
    <location>
        <begin position="1"/>
        <end position="340"/>
    </location>
</feature>
<reference key="1">
    <citation type="journal article" date="2005" name="BMC Genomics">
        <title>Characterization of 954 bovine full-CDS cDNA sequences.</title>
        <authorList>
            <person name="Harhay G.P."/>
            <person name="Sonstegard T.S."/>
            <person name="Keele J.W."/>
            <person name="Heaton M.P."/>
            <person name="Clawson M.L."/>
            <person name="Snelling W.M."/>
            <person name="Wiedmann R.T."/>
            <person name="Van Tassell C.P."/>
            <person name="Smith T.P.L."/>
        </authorList>
    </citation>
    <scope>NUCLEOTIDE SEQUENCE [LARGE SCALE MRNA] (ISOFORM 2)</scope>
</reference>
<reference key="2">
    <citation type="submission" date="2005-09" db="EMBL/GenBank/DDBJ databases">
        <authorList>
            <consortium name="NIH - Mammalian Gene Collection (MGC) project"/>
        </authorList>
    </citation>
    <scope>NUCLEOTIDE SEQUENCE [LARGE SCALE MRNA] (ISOFORM 1)</scope>
    <source>
        <strain>Hereford</strain>
        <tissue>Hypothalamus</tissue>
    </source>
</reference>
<dbReference type="EMBL" id="BT029822">
    <property type="protein sequence ID" value="ABM06085.1"/>
    <property type="molecule type" value="mRNA"/>
</dbReference>
<dbReference type="EMBL" id="BC105450">
    <property type="protein sequence ID" value="AAI05451.1"/>
    <property type="molecule type" value="mRNA"/>
</dbReference>
<dbReference type="RefSeq" id="NP_001039396.1">
    <molecule id="Q2KJ97-1"/>
    <property type="nucleotide sequence ID" value="NM_001045931.1"/>
</dbReference>
<dbReference type="SMR" id="Q2KJ97"/>
<dbReference type="FunCoup" id="Q2KJ97">
    <property type="interactions" value="2355"/>
</dbReference>
<dbReference type="STRING" id="9913.ENSBTAP00000033145"/>
<dbReference type="PaxDb" id="9913-ENSBTAP00000033145"/>
<dbReference type="Ensembl" id="ENSBTAT00000033225.4">
    <molecule id="Q2KJ97-1"/>
    <property type="protein sequence ID" value="ENSBTAP00000033145.2"/>
    <property type="gene ID" value="ENSBTAG00000016696.7"/>
</dbReference>
<dbReference type="GeneID" id="505994"/>
<dbReference type="KEGG" id="bta:505994"/>
<dbReference type="CTD" id="23154"/>
<dbReference type="VEuPathDB" id="HostDB:ENSBTAG00000016696"/>
<dbReference type="eggNOG" id="KOG2611">
    <property type="taxonomic scope" value="Eukaryota"/>
</dbReference>
<dbReference type="GeneTree" id="ENSGT00390000013601"/>
<dbReference type="HOGENOM" id="CLU_012443_0_0_1"/>
<dbReference type="InParanoid" id="Q2KJ97"/>
<dbReference type="OMA" id="IVHYKKP"/>
<dbReference type="OrthoDB" id="8186546at2759"/>
<dbReference type="TreeFam" id="TF323752"/>
<dbReference type="Proteomes" id="UP000009136">
    <property type="component" value="Chromosome 3"/>
</dbReference>
<dbReference type="Bgee" id="ENSBTAG00000016696">
    <property type="expression patterns" value="Expressed in prefrontal cortex and 104 other cell types or tissues"/>
</dbReference>
<dbReference type="GO" id="GO:0005829">
    <property type="term" value="C:cytosol"/>
    <property type="evidence" value="ECO:0000250"/>
    <property type="project" value="UniProtKB"/>
</dbReference>
<dbReference type="GO" id="GO:0030425">
    <property type="term" value="C:dendrite"/>
    <property type="evidence" value="ECO:0000250"/>
    <property type="project" value="UniProtKB"/>
</dbReference>
<dbReference type="GO" id="GO:0010008">
    <property type="term" value="C:endosome membrane"/>
    <property type="evidence" value="ECO:0007669"/>
    <property type="project" value="UniProtKB-SubCell"/>
</dbReference>
<dbReference type="GO" id="GO:0043025">
    <property type="term" value="C:neuronal cell body"/>
    <property type="evidence" value="ECO:0000250"/>
    <property type="project" value="UniProtKB"/>
</dbReference>
<dbReference type="GO" id="GO:0098794">
    <property type="term" value="C:postsynapse"/>
    <property type="evidence" value="ECO:0007669"/>
    <property type="project" value="UniProtKB-SubCell"/>
</dbReference>
<dbReference type="GO" id="GO:0031175">
    <property type="term" value="P:neuron projection development"/>
    <property type="evidence" value="ECO:0000250"/>
    <property type="project" value="UniProtKB"/>
</dbReference>
<dbReference type="GO" id="GO:0048168">
    <property type="term" value="P:regulation of neuronal synaptic plasticity"/>
    <property type="evidence" value="ECO:0000318"/>
    <property type="project" value="GO_Central"/>
</dbReference>
<dbReference type="InterPro" id="IPR016024">
    <property type="entry name" value="ARM-type_fold"/>
</dbReference>
<dbReference type="InterPro" id="IPR008709">
    <property type="entry name" value="Neurochondrin"/>
</dbReference>
<dbReference type="PANTHER" id="PTHR13109">
    <property type="entry name" value="NEUROCHONDRIN"/>
    <property type="match status" value="1"/>
</dbReference>
<dbReference type="PANTHER" id="PTHR13109:SF7">
    <property type="entry name" value="NEUROCHONDRIN"/>
    <property type="match status" value="1"/>
</dbReference>
<dbReference type="Pfam" id="PF05536">
    <property type="entry name" value="Neurochondrin"/>
    <property type="match status" value="1"/>
</dbReference>
<dbReference type="SUPFAM" id="SSF48371">
    <property type="entry name" value="ARM repeat"/>
    <property type="match status" value="1"/>
</dbReference>
<keyword id="KW-0007">Acetylation</keyword>
<keyword id="KW-0025">Alternative splicing</keyword>
<keyword id="KW-0966">Cell projection</keyword>
<keyword id="KW-0963">Cytoplasm</keyword>
<keyword id="KW-0967">Endosome</keyword>
<keyword id="KW-0449">Lipoprotein</keyword>
<keyword id="KW-0472">Membrane</keyword>
<keyword id="KW-0488">Methylation</keyword>
<keyword id="KW-0564">Palmitate</keyword>
<keyword id="KW-0597">Phosphoprotein</keyword>
<keyword id="KW-1185">Reference proteome</keyword>
<keyword id="KW-0770">Synapse</keyword>
<sequence length="729" mass="78799">MSCCDLAAAGQLGKAGIMASDCEPALNQAESRNPTLERYLGALREAKNDSEQFAALLLVTKAVKAGDIDAKTRRRIFDAVGFTFPNRLLTTKEAPDGCPDHVLRALGVALLACFCSDPELAAHPQVLNKIPILSTFLTARGDPDDAARRSMVDDTYQCLTAVAGTPRGPRHLIAGGTVSALCQAYLGHGYGFDQALALLVGLLAAAETQCWKEAEPDLLAVLRGLSEDFQKAEDASKFELCQLLPLFLPPTTVPSECLRDLQAGLARILGSKLSSWQRNPALKLAARLAHACGSDWIPAGNSGSKFLALLVNLACVEVRLALEETGTEVKEDVVTACYALMELGIQECTRCEQSLLKEPQKVQLVSIMKEAIGAVIHYLQQVGPEKQKEPFVFASVRILGAWLAEETSSLRKEVCQLLPFLVRYAKTLYEEAEEANDLSQQVATLAISPTTPGPTWPGDALRLLLPGWCHLTVEDGPREILIKEGAPSLLCKYFLQQWELTSPGHDTSVLPDSVEIGLQTCCHIFLNLVVTAPGLIKRDACFTSLMNTLMASLPSLVQQQGRLLLAANVATLGLLMARLLSTSPALQGTPASRGFFAAAILFLSQSHVARATPGSEQAVLALSPDYEGVWADLQELWFLGMQAFTGCVPLLPWLAPAALRSRWPQELLQLLGSVSPNSVKPEMVAAYQGVLVELARANRLCREAMRLQAGEETASHYRMAALEQCLAEP</sequence>
<protein>
    <recommendedName>
        <fullName>Neurochondrin</fullName>
    </recommendedName>
</protein>